<name>RS10_SULSY</name>
<organism>
    <name type="scientific">Sulfurihydrogenibium sp. (strain YO3AOP1)</name>
    <dbReference type="NCBI Taxonomy" id="436114"/>
    <lineage>
        <taxon>Bacteria</taxon>
        <taxon>Pseudomonadati</taxon>
        <taxon>Aquificota</taxon>
        <taxon>Aquificia</taxon>
        <taxon>Aquificales</taxon>
        <taxon>Hydrogenothermaceae</taxon>
        <taxon>Sulfurihydrogenibium</taxon>
    </lineage>
</organism>
<proteinExistence type="inferred from homology"/>
<sequence length="102" mass="11814">MQEKIRIKLKAFDHKVLDQSVKQIVDTVKRGGGLVKGPIPLPTRRRVWCVHRSPHKFEQSREHFEMRIHKRLIEIENATPQTIEALMDISLPAGVEVEIKLS</sequence>
<comment type="function">
    <text evidence="1">Involved in the binding of tRNA to the ribosomes.</text>
</comment>
<comment type="subunit">
    <text evidence="1">Part of the 30S ribosomal subunit.</text>
</comment>
<comment type="similarity">
    <text evidence="1">Belongs to the universal ribosomal protein uS10 family.</text>
</comment>
<evidence type="ECO:0000255" key="1">
    <source>
        <dbReference type="HAMAP-Rule" id="MF_00508"/>
    </source>
</evidence>
<evidence type="ECO:0000305" key="2"/>
<protein>
    <recommendedName>
        <fullName evidence="1">Small ribosomal subunit protein uS10</fullName>
    </recommendedName>
    <alternativeName>
        <fullName evidence="2">30S ribosomal protein S10</fullName>
    </alternativeName>
</protein>
<feature type="chain" id="PRO_1000146084" description="Small ribosomal subunit protein uS10">
    <location>
        <begin position="1"/>
        <end position="102"/>
    </location>
</feature>
<accession>B2V7L4</accession>
<dbReference type="EMBL" id="CP001080">
    <property type="protein sequence ID" value="ACD65937.1"/>
    <property type="molecule type" value="Genomic_DNA"/>
</dbReference>
<dbReference type="RefSeq" id="WP_007546165.1">
    <property type="nucleotide sequence ID" value="NC_010730.1"/>
</dbReference>
<dbReference type="SMR" id="B2V7L4"/>
<dbReference type="STRING" id="436114.SYO3AOP1_0292"/>
<dbReference type="KEGG" id="sul:SYO3AOP1_0292"/>
<dbReference type="eggNOG" id="COG0051">
    <property type="taxonomic scope" value="Bacteria"/>
</dbReference>
<dbReference type="HOGENOM" id="CLU_122625_1_3_0"/>
<dbReference type="GO" id="GO:1990904">
    <property type="term" value="C:ribonucleoprotein complex"/>
    <property type="evidence" value="ECO:0007669"/>
    <property type="project" value="UniProtKB-KW"/>
</dbReference>
<dbReference type="GO" id="GO:0005840">
    <property type="term" value="C:ribosome"/>
    <property type="evidence" value="ECO:0007669"/>
    <property type="project" value="UniProtKB-KW"/>
</dbReference>
<dbReference type="GO" id="GO:0003735">
    <property type="term" value="F:structural constituent of ribosome"/>
    <property type="evidence" value="ECO:0007669"/>
    <property type="project" value="InterPro"/>
</dbReference>
<dbReference type="GO" id="GO:0000049">
    <property type="term" value="F:tRNA binding"/>
    <property type="evidence" value="ECO:0007669"/>
    <property type="project" value="UniProtKB-UniRule"/>
</dbReference>
<dbReference type="GO" id="GO:0006412">
    <property type="term" value="P:translation"/>
    <property type="evidence" value="ECO:0007669"/>
    <property type="project" value="UniProtKB-UniRule"/>
</dbReference>
<dbReference type="FunFam" id="3.30.70.600:FF:000003">
    <property type="entry name" value="30S ribosomal protein S10"/>
    <property type="match status" value="1"/>
</dbReference>
<dbReference type="Gene3D" id="3.30.70.600">
    <property type="entry name" value="Ribosomal protein S10 domain"/>
    <property type="match status" value="1"/>
</dbReference>
<dbReference type="HAMAP" id="MF_00508">
    <property type="entry name" value="Ribosomal_uS10"/>
    <property type="match status" value="1"/>
</dbReference>
<dbReference type="InterPro" id="IPR001848">
    <property type="entry name" value="Ribosomal_uS10"/>
</dbReference>
<dbReference type="InterPro" id="IPR018268">
    <property type="entry name" value="Ribosomal_uS10_CS"/>
</dbReference>
<dbReference type="InterPro" id="IPR027486">
    <property type="entry name" value="Ribosomal_uS10_dom"/>
</dbReference>
<dbReference type="InterPro" id="IPR036838">
    <property type="entry name" value="Ribosomal_uS10_dom_sf"/>
</dbReference>
<dbReference type="NCBIfam" id="NF001861">
    <property type="entry name" value="PRK00596.1"/>
    <property type="match status" value="1"/>
</dbReference>
<dbReference type="NCBIfam" id="TIGR01049">
    <property type="entry name" value="rpsJ_bact"/>
    <property type="match status" value="1"/>
</dbReference>
<dbReference type="PANTHER" id="PTHR11700">
    <property type="entry name" value="30S RIBOSOMAL PROTEIN S10 FAMILY MEMBER"/>
    <property type="match status" value="1"/>
</dbReference>
<dbReference type="Pfam" id="PF00338">
    <property type="entry name" value="Ribosomal_S10"/>
    <property type="match status" value="1"/>
</dbReference>
<dbReference type="PRINTS" id="PR00971">
    <property type="entry name" value="RIBOSOMALS10"/>
</dbReference>
<dbReference type="SMART" id="SM01403">
    <property type="entry name" value="Ribosomal_S10"/>
    <property type="match status" value="1"/>
</dbReference>
<dbReference type="SUPFAM" id="SSF54999">
    <property type="entry name" value="Ribosomal protein S10"/>
    <property type="match status" value="1"/>
</dbReference>
<dbReference type="PROSITE" id="PS00361">
    <property type="entry name" value="RIBOSOMAL_S10"/>
    <property type="match status" value="1"/>
</dbReference>
<keyword id="KW-0687">Ribonucleoprotein</keyword>
<keyword id="KW-0689">Ribosomal protein</keyword>
<reference key="1">
    <citation type="journal article" date="2009" name="J. Bacteriol.">
        <title>Complete and draft genome sequences of six members of the Aquificales.</title>
        <authorList>
            <person name="Reysenbach A.-L."/>
            <person name="Hamamura N."/>
            <person name="Podar M."/>
            <person name="Griffiths E."/>
            <person name="Ferreira S."/>
            <person name="Hochstein R."/>
            <person name="Heidelberg J."/>
            <person name="Johnson J."/>
            <person name="Mead D."/>
            <person name="Pohorille A."/>
            <person name="Sarmiento M."/>
            <person name="Schweighofer K."/>
            <person name="Seshadri R."/>
            <person name="Voytek M.A."/>
        </authorList>
    </citation>
    <scope>NUCLEOTIDE SEQUENCE [LARGE SCALE GENOMIC DNA]</scope>
    <source>
        <strain>YO3AOP1</strain>
    </source>
</reference>
<gene>
    <name evidence="1" type="primary">rpsJ</name>
    <name type="ordered locus">SYO3AOP1_0292</name>
</gene>